<organism>
    <name type="scientific">Mus musculus</name>
    <name type="common">Mouse</name>
    <dbReference type="NCBI Taxonomy" id="10090"/>
    <lineage>
        <taxon>Eukaryota</taxon>
        <taxon>Metazoa</taxon>
        <taxon>Chordata</taxon>
        <taxon>Craniata</taxon>
        <taxon>Vertebrata</taxon>
        <taxon>Euteleostomi</taxon>
        <taxon>Mammalia</taxon>
        <taxon>Eutheria</taxon>
        <taxon>Euarchontoglires</taxon>
        <taxon>Glires</taxon>
        <taxon>Rodentia</taxon>
        <taxon>Myomorpha</taxon>
        <taxon>Muroidea</taxon>
        <taxon>Muridae</taxon>
        <taxon>Murinae</taxon>
        <taxon>Mus</taxon>
        <taxon>Mus</taxon>
    </lineage>
</organism>
<keyword id="KW-0025">Alternative splicing</keyword>
<keyword id="KW-1003">Cell membrane</keyword>
<keyword id="KW-0175">Coiled coil</keyword>
<keyword id="KW-0963">Cytoplasm</keyword>
<keyword id="KW-0268">Exocytosis</keyword>
<keyword id="KW-0472">Membrane</keyword>
<keyword id="KW-0597">Phosphoprotein</keyword>
<keyword id="KW-0653">Protein transport</keyword>
<keyword id="KW-1185">Reference proteome</keyword>
<keyword id="KW-0677">Repeat</keyword>
<keyword id="KW-0813">Transport</keyword>
<keyword id="KW-0853">WD repeat</keyword>
<gene>
    <name type="primary">Stxbp5</name>
    <name type="synonym">Kiaa4253</name>
    <name type="synonym">Llgl3</name>
</gene>
<dbReference type="EMBL" id="AF516607">
    <property type="protein sequence ID" value="AAM61881.1"/>
    <property type="molecule type" value="mRNA"/>
</dbReference>
<dbReference type="EMBL" id="AF516608">
    <property type="protein sequence ID" value="AAM61882.1"/>
    <property type="molecule type" value="mRNA"/>
</dbReference>
<dbReference type="EMBL" id="AK019788">
    <property type="protein sequence ID" value="BAB31853.1"/>
    <property type="molecule type" value="mRNA"/>
</dbReference>
<dbReference type="EMBL" id="AC122390">
    <property type="status" value="NOT_ANNOTATED_CDS"/>
    <property type="molecule type" value="Genomic_DNA"/>
</dbReference>
<dbReference type="EMBL" id="AK122417">
    <property type="protein sequence ID" value="BAC65699.1"/>
    <property type="molecule type" value="mRNA"/>
</dbReference>
<dbReference type="RefSeq" id="NP_001394992.1">
    <molecule id="Q8K400-1"/>
    <property type="nucleotide sequence ID" value="NM_001408063.1"/>
</dbReference>
<dbReference type="RefSeq" id="XP_006512989.1">
    <property type="nucleotide sequence ID" value="XM_006512926.3"/>
</dbReference>
<dbReference type="SMR" id="Q8K400"/>
<dbReference type="BioGRID" id="219650">
    <property type="interactions" value="4"/>
</dbReference>
<dbReference type="FunCoup" id="Q8K400">
    <property type="interactions" value="2652"/>
</dbReference>
<dbReference type="IntAct" id="Q8K400">
    <property type="interactions" value="2"/>
</dbReference>
<dbReference type="MINT" id="Q8K400"/>
<dbReference type="STRING" id="10090.ENSMUSP00000123253"/>
<dbReference type="iPTMnet" id="Q8K400"/>
<dbReference type="PhosphoSitePlus" id="Q8K400"/>
<dbReference type="SwissPalm" id="Q8K400"/>
<dbReference type="jPOST" id="Q8K400"/>
<dbReference type="PaxDb" id="10090-ENSMUSP00000123253"/>
<dbReference type="PeptideAtlas" id="Q8K400"/>
<dbReference type="ProteomicsDB" id="254778">
    <molecule id="Q8K400-1"/>
</dbReference>
<dbReference type="ProteomicsDB" id="254779">
    <molecule id="Q8K400-2"/>
</dbReference>
<dbReference type="Pumba" id="Q8K400"/>
<dbReference type="Antibodypedia" id="33249">
    <property type="antibodies" value="49 antibodies from 15 providers"/>
</dbReference>
<dbReference type="Ensembl" id="ENSMUST00000038213.14">
    <molecule id="Q8K400-1"/>
    <property type="protein sequence ID" value="ENSMUSP00000044535.8"/>
    <property type="gene ID" value="ENSMUSG00000019790.18"/>
</dbReference>
<dbReference type="GeneID" id="78808"/>
<dbReference type="UCSC" id="uc007eiy.1">
    <molecule id="Q8K400-2"/>
    <property type="organism name" value="mouse"/>
</dbReference>
<dbReference type="UCSC" id="uc007eja.1">
    <molecule id="Q8K400-1"/>
    <property type="organism name" value="mouse"/>
</dbReference>
<dbReference type="AGR" id="MGI:1926058"/>
<dbReference type="MGI" id="MGI:1926058">
    <property type="gene designation" value="Stxbp5"/>
</dbReference>
<dbReference type="VEuPathDB" id="HostDB:ENSMUSG00000019790"/>
<dbReference type="eggNOG" id="KOG1983">
    <property type="taxonomic scope" value="Eukaryota"/>
</dbReference>
<dbReference type="GeneTree" id="ENSGT00950000182906"/>
<dbReference type="InParanoid" id="Q8K400"/>
<dbReference type="OrthoDB" id="19944at2759"/>
<dbReference type="PhylomeDB" id="Q8K400"/>
<dbReference type="BioGRID-ORCS" id="78808">
    <property type="hits" value="1 hit in 78 CRISPR screens"/>
</dbReference>
<dbReference type="CD-CODE" id="CE726F99">
    <property type="entry name" value="Postsynaptic density"/>
</dbReference>
<dbReference type="ChiTaRS" id="Stxbp5">
    <property type="organism name" value="mouse"/>
</dbReference>
<dbReference type="PRO" id="PR:Q8K400"/>
<dbReference type="Proteomes" id="UP000000589">
    <property type="component" value="Chromosome 10"/>
</dbReference>
<dbReference type="RNAct" id="Q8K400">
    <property type="molecule type" value="protein"/>
</dbReference>
<dbReference type="Bgee" id="ENSMUSG00000019790">
    <property type="expression patterns" value="Expressed in animal zygote and 220 other cell types or tissues"/>
</dbReference>
<dbReference type="ExpressionAtlas" id="Q8K400">
    <property type="expression patterns" value="baseline and differential"/>
</dbReference>
<dbReference type="GO" id="GO:0005892">
    <property type="term" value="C:acetylcholine-gated channel complex"/>
    <property type="evidence" value="ECO:0000314"/>
    <property type="project" value="MGI"/>
</dbReference>
<dbReference type="GO" id="GO:0005829">
    <property type="term" value="C:cytosol"/>
    <property type="evidence" value="ECO:0007669"/>
    <property type="project" value="Ensembl"/>
</dbReference>
<dbReference type="GO" id="GO:0098674">
    <property type="term" value="C:extrinsic component of neuronal dense core vesicle membrane"/>
    <property type="evidence" value="ECO:0000314"/>
    <property type="project" value="SynGO"/>
</dbReference>
<dbReference type="GO" id="GO:0098686">
    <property type="term" value="C:hippocampal mossy fiber to CA3 synapse"/>
    <property type="evidence" value="ECO:0000314"/>
    <property type="project" value="SynGO"/>
</dbReference>
<dbReference type="GO" id="GO:0098793">
    <property type="term" value="C:presynapse"/>
    <property type="evidence" value="ECO:0000314"/>
    <property type="project" value="SynGO"/>
</dbReference>
<dbReference type="GO" id="GO:0030141">
    <property type="term" value="C:secretory granule"/>
    <property type="evidence" value="ECO:0000303"/>
    <property type="project" value="BHF-UCL"/>
</dbReference>
<dbReference type="GO" id="GO:0019905">
    <property type="term" value="F:syntaxin binding"/>
    <property type="evidence" value="ECO:0000353"/>
    <property type="project" value="MGI"/>
</dbReference>
<dbReference type="GO" id="GO:0017075">
    <property type="term" value="F:syntaxin-1 binding"/>
    <property type="evidence" value="ECO:0000314"/>
    <property type="project" value="BHF-UCL"/>
</dbReference>
<dbReference type="GO" id="GO:0007409">
    <property type="term" value="P:axonogenesis"/>
    <property type="evidence" value="ECO:0000304"/>
    <property type="project" value="BHF-UCL"/>
</dbReference>
<dbReference type="GO" id="GO:0006887">
    <property type="term" value="P:exocytosis"/>
    <property type="evidence" value="ECO:0000314"/>
    <property type="project" value="MGI"/>
</dbReference>
<dbReference type="GO" id="GO:0045921">
    <property type="term" value="P:positive regulation of exocytosis"/>
    <property type="evidence" value="ECO:0000314"/>
    <property type="project" value="BHF-UCL"/>
</dbReference>
<dbReference type="GO" id="GO:0015031">
    <property type="term" value="P:protein transport"/>
    <property type="evidence" value="ECO:0007669"/>
    <property type="project" value="UniProtKB-KW"/>
</dbReference>
<dbReference type="GO" id="GO:0017157">
    <property type="term" value="P:regulation of exocytosis"/>
    <property type="evidence" value="ECO:0000314"/>
    <property type="project" value="MGI"/>
</dbReference>
<dbReference type="GO" id="GO:2000300">
    <property type="term" value="P:regulation of synaptic vesicle exocytosis"/>
    <property type="evidence" value="ECO:0000314"/>
    <property type="project" value="SynGO"/>
</dbReference>
<dbReference type="GO" id="GO:0010807">
    <property type="term" value="P:regulation of synaptic vesicle priming"/>
    <property type="evidence" value="ECO:0000314"/>
    <property type="project" value="SynGO"/>
</dbReference>
<dbReference type="CDD" id="cd15893">
    <property type="entry name" value="R-SNARE_STXBP5"/>
    <property type="match status" value="1"/>
</dbReference>
<dbReference type="FunFam" id="2.130.10.10:FF:003138">
    <property type="entry name" value="Syntaxin binding protein 5 like"/>
    <property type="match status" value="1"/>
</dbReference>
<dbReference type="FunFam" id="1.20.5.110:FF:000001">
    <property type="entry name" value="syntaxin-binding protein 5 isoform X1"/>
    <property type="match status" value="1"/>
</dbReference>
<dbReference type="FunFam" id="2.130.10.10:FF:000186">
    <property type="entry name" value="syntaxin-binding protein 5-like isoform X2"/>
    <property type="match status" value="1"/>
</dbReference>
<dbReference type="Gene3D" id="1.20.5.110">
    <property type="match status" value="1"/>
</dbReference>
<dbReference type="Gene3D" id="2.130.10.10">
    <property type="entry name" value="YVTN repeat-like/Quinoprotein amine dehydrogenase"/>
    <property type="match status" value="3"/>
</dbReference>
<dbReference type="InterPro" id="IPR000664">
    <property type="entry name" value="Lethal2_giant"/>
</dbReference>
<dbReference type="InterPro" id="IPR013905">
    <property type="entry name" value="Lgl_C_dom"/>
</dbReference>
<dbReference type="InterPro" id="IPR013577">
    <property type="entry name" value="LLGL2"/>
</dbReference>
<dbReference type="InterPro" id="IPR042855">
    <property type="entry name" value="V_SNARE_CC"/>
</dbReference>
<dbReference type="InterPro" id="IPR015943">
    <property type="entry name" value="WD40/YVTN_repeat-like_dom_sf"/>
</dbReference>
<dbReference type="InterPro" id="IPR036322">
    <property type="entry name" value="WD40_repeat_dom_sf"/>
</dbReference>
<dbReference type="InterPro" id="IPR001680">
    <property type="entry name" value="WD40_rpt"/>
</dbReference>
<dbReference type="PANTHER" id="PTHR10241">
    <property type="entry name" value="LETHAL 2 GIANT LARVAE PROTEIN"/>
    <property type="match status" value="1"/>
</dbReference>
<dbReference type="PANTHER" id="PTHR10241:SF22">
    <property type="entry name" value="SYNTAXIN-BINDING PROTEIN 5"/>
    <property type="match status" value="1"/>
</dbReference>
<dbReference type="Pfam" id="PF08596">
    <property type="entry name" value="Lgl_C"/>
    <property type="match status" value="1"/>
</dbReference>
<dbReference type="Pfam" id="PF08366">
    <property type="entry name" value="LLGL"/>
    <property type="match status" value="1"/>
</dbReference>
<dbReference type="Pfam" id="PF00400">
    <property type="entry name" value="WD40"/>
    <property type="match status" value="1"/>
</dbReference>
<dbReference type="PRINTS" id="PR00962">
    <property type="entry name" value="LETHAL2GIANT"/>
</dbReference>
<dbReference type="SMART" id="SM00320">
    <property type="entry name" value="WD40"/>
    <property type="match status" value="7"/>
</dbReference>
<dbReference type="SUPFAM" id="SSF58038">
    <property type="entry name" value="SNARE fusion complex"/>
    <property type="match status" value="1"/>
</dbReference>
<dbReference type="SUPFAM" id="SSF50978">
    <property type="entry name" value="WD40 repeat-like"/>
    <property type="match status" value="2"/>
</dbReference>
<dbReference type="PROSITE" id="PS50892">
    <property type="entry name" value="V_SNARE"/>
    <property type="match status" value="1"/>
</dbReference>
<dbReference type="PROSITE" id="PS00678">
    <property type="entry name" value="WD_REPEATS_1"/>
    <property type="match status" value="2"/>
</dbReference>
<dbReference type="PROSITE" id="PS50082">
    <property type="entry name" value="WD_REPEATS_2"/>
    <property type="match status" value="1"/>
</dbReference>
<dbReference type="PROSITE" id="PS50294">
    <property type="entry name" value="WD_REPEATS_REGION"/>
    <property type="match status" value="1"/>
</dbReference>
<protein>
    <recommendedName>
        <fullName>Syntaxin-binding protein 5</fullName>
    </recommendedName>
    <alternativeName>
        <fullName>Lethal(2) giant larvae protein homolog 3</fullName>
    </alternativeName>
    <alternativeName>
        <fullName>Tomosyn-1</fullName>
    </alternativeName>
</protein>
<comment type="function">
    <text evidence="1 5">Plays a regulatory role in calcium-dependent exocytosis and neurotransmitter release (By similarity). Inhibits membrane fusion between transport vesicles and the plasma membrane. May modulate the assembly of trans-SNARE complexes between transport vesicles and the plasma membrane. Competes with STXBP1 for STX1 binding. Inhibits translocation of GLUT4 from intracellular vesicles to the plasma membrane.</text>
</comment>
<comment type="subunit">
    <text evidence="1 5">Part of a complex that contains STX1, STXBP5, SNAP25 and SYT1 (By similarity). Interacts with STX1A and STX4A via its v-SNARE homology domain. Part of a complex that contains STXBP5, STX4A and SNAP23.</text>
</comment>
<comment type="subcellular location">
    <subcellularLocation>
        <location evidence="5">Cytoplasm</location>
    </subcellularLocation>
    <subcellularLocation>
        <location evidence="5">Cell membrane</location>
        <topology evidence="5">Peripheral membrane protein</topology>
    </subcellularLocation>
    <subcellularLocation>
        <location evidence="5">Membrane</location>
        <topology evidence="5">Peripheral membrane protein</topology>
    </subcellularLocation>
    <text>Cytoplasmic, and associated with vesicular membranes and the plasma membrane.</text>
</comment>
<comment type="alternative products">
    <event type="alternative splicing"/>
    <isoform>
        <id>Q8K400-1</id>
        <name>1</name>
        <sequence type="displayed"/>
    </isoform>
    <isoform>
        <id>Q8K400-2</id>
        <name>2</name>
        <sequence type="described" ref="VSP_016206"/>
    </isoform>
</comment>
<comment type="tissue specificity">
    <text evidence="5 6">Detected in heart, spleen, lung, skeletal muscle, liver and kidney (at protein level). Detected in brain, particularly in the olfactory bulb and in hippocampus. Detected in the tenia tecta and in the piriform layer of the brain cortex.</text>
</comment>
<comment type="similarity">
    <text evidence="8">Belongs to the WD repeat L(2)GL family.</text>
</comment>
<accession>Q8K400</accession>
<accession>E9QLY8</accession>
<accession>Q80TM5</accession>
<accession>Q8K401</accession>
<accession>Q9D2F3</accession>
<feature type="chain" id="PRO_0000051245" description="Syntaxin-binding protein 5">
    <location>
        <begin position="1"/>
        <end position="1152"/>
    </location>
</feature>
<feature type="repeat" description="WD 1">
    <location>
        <begin position="62"/>
        <end position="95"/>
    </location>
</feature>
<feature type="repeat" description="WD 2">
    <location>
        <begin position="102"/>
        <end position="141"/>
    </location>
</feature>
<feature type="repeat" description="WD 3">
    <location>
        <begin position="146"/>
        <end position="182"/>
    </location>
</feature>
<feature type="repeat" description="WD 4">
    <location>
        <begin position="201"/>
        <end position="235"/>
    </location>
</feature>
<feature type="repeat" description="WD 5">
    <location>
        <begin position="241"/>
        <end position="273"/>
    </location>
</feature>
<feature type="repeat" description="WD 6">
    <location>
        <begin position="295"/>
        <end position="337"/>
    </location>
</feature>
<feature type="repeat" description="WD 7">
    <location>
        <begin position="345"/>
        <end position="379"/>
    </location>
</feature>
<feature type="repeat" description="WD 8">
    <location>
        <begin position="401"/>
        <end position="478"/>
    </location>
</feature>
<feature type="repeat" description="WD 9">
    <location>
        <begin position="506"/>
        <end position="620"/>
    </location>
</feature>
<feature type="repeat" description="WD 10">
    <location>
        <begin position="634"/>
        <end position="696"/>
    </location>
</feature>
<feature type="repeat" description="WD 11">
    <location>
        <begin position="795"/>
        <end position="852"/>
    </location>
</feature>
<feature type="repeat" description="WD 12">
    <location>
        <begin position="861"/>
        <end position="935"/>
    </location>
</feature>
<feature type="repeat" description="WD 13">
    <location>
        <begin position="940"/>
        <end position="984"/>
    </location>
</feature>
<feature type="repeat" description="WD 14">
    <location>
        <begin position="998"/>
        <end position="1021"/>
    </location>
</feature>
<feature type="domain" description="v-SNARE coiled-coil homology" evidence="3">
    <location>
        <begin position="1087"/>
        <end position="1147"/>
    </location>
</feature>
<feature type="region of interest" description="Disordered" evidence="4">
    <location>
        <begin position="14"/>
        <end position="35"/>
    </location>
</feature>
<feature type="region of interest" description="Disordered" evidence="4">
    <location>
        <begin position="555"/>
        <end position="596"/>
    </location>
</feature>
<feature type="region of interest" description="Disordered" evidence="4">
    <location>
        <begin position="675"/>
        <end position="731"/>
    </location>
</feature>
<feature type="region of interest" description="Disordered" evidence="4">
    <location>
        <begin position="883"/>
        <end position="907"/>
    </location>
</feature>
<feature type="compositionally biased region" description="Low complexity" evidence="4">
    <location>
        <begin position="17"/>
        <end position="28"/>
    </location>
</feature>
<feature type="compositionally biased region" description="Low complexity" evidence="4">
    <location>
        <begin position="713"/>
        <end position="722"/>
    </location>
</feature>
<feature type="compositionally biased region" description="Basic and acidic residues" evidence="4">
    <location>
        <begin position="883"/>
        <end position="893"/>
    </location>
</feature>
<feature type="modified residue" description="Phosphoserine" evidence="2">
    <location>
        <position position="693"/>
    </location>
</feature>
<feature type="modified residue" description="Phosphoserine" evidence="11">
    <location>
        <position position="724"/>
    </location>
</feature>
<feature type="modified residue" description="Phosphoserine" evidence="10 11">
    <location>
        <position position="760"/>
    </location>
</feature>
<feature type="modified residue" description="Phosphothreonine" evidence="2">
    <location>
        <position position="763"/>
    </location>
</feature>
<feature type="modified residue" description="Phosphoserine" evidence="9 10 11">
    <location>
        <position position="783"/>
    </location>
</feature>
<feature type="modified residue" description="Phosphothreonine" evidence="11">
    <location>
        <position position="785"/>
    </location>
</feature>
<feature type="modified residue" description="Phosphoserine" evidence="9 10 11">
    <location>
        <position position="786"/>
    </location>
</feature>
<feature type="modified residue" description="Phosphoserine" evidence="11">
    <location>
        <position position="901"/>
    </location>
</feature>
<feature type="modified residue" description="Phosphoserine" evidence="11">
    <location>
        <position position="903"/>
    </location>
</feature>
<feature type="modified residue" description="Phosphothreonine" evidence="2">
    <location>
        <position position="1040"/>
    </location>
</feature>
<feature type="modified residue" description="Phosphoserine" evidence="11">
    <location>
        <position position="1059"/>
    </location>
</feature>
<feature type="modified residue" description="Phosphoserine" evidence="2">
    <location>
        <position position="1132"/>
    </location>
</feature>
<feature type="splice variant" id="VSP_016206" description="In isoform 2." evidence="7">
    <location>
        <begin position="1"/>
        <end position="754"/>
    </location>
</feature>
<feature type="sequence conflict" description="In Ref. 1; AAM61882." evidence="8" ref="1">
    <original>V</original>
    <variation>A</variation>
    <location>
        <position position="90"/>
    </location>
</feature>
<feature type="sequence conflict" description="In Ref. 1; AAM61882." evidence="8" ref="1">
    <original>A</original>
    <variation>S</variation>
    <location>
        <position position="194"/>
    </location>
</feature>
<feature type="sequence conflict" description="In Ref. 1; AAM61882." evidence="8" ref="1">
    <original>L</original>
    <variation>P</variation>
    <location>
        <position position="213"/>
    </location>
</feature>
<feature type="sequence conflict" description="In Ref. 1; AAM61882." evidence="8" ref="1">
    <original>D</original>
    <variation>E</variation>
    <location>
        <position position="225"/>
    </location>
</feature>
<feature type="sequence conflict" description="In Ref. 1; AAM61881." evidence="8" ref="1">
    <original>D</original>
    <variation>G</variation>
    <location>
        <position position="238"/>
    </location>
</feature>
<feature type="sequence conflict" description="In Ref. 1; AAM61881." evidence="8" ref="1">
    <original>H</original>
    <variation>Y</variation>
    <location>
        <position position="247"/>
    </location>
</feature>
<feature type="sequence conflict" description="In Ref. 1; AAM61881." evidence="8" ref="1">
    <original>A</original>
    <variation>T</variation>
    <location>
        <position position="271"/>
    </location>
</feature>
<feature type="sequence conflict" description="In Ref. 1; AAM61882." evidence="8" ref="1">
    <original>L</original>
    <variation>F</variation>
    <location>
        <position position="301"/>
    </location>
</feature>
<feature type="sequence conflict" description="In Ref. 3; BAB31853." evidence="8" ref="3">
    <original>S</original>
    <variation>F</variation>
    <location>
        <position position="811"/>
    </location>
</feature>
<evidence type="ECO:0000250" key="1"/>
<evidence type="ECO:0000250" key="2">
    <source>
        <dbReference type="UniProtKB" id="Q5T5C0"/>
    </source>
</evidence>
<evidence type="ECO:0000255" key="3">
    <source>
        <dbReference type="PROSITE-ProRule" id="PRU00290"/>
    </source>
</evidence>
<evidence type="ECO:0000256" key="4">
    <source>
        <dbReference type="SAM" id="MobiDB-lite"/>
    </source>
</evidence>
<evidence type="ECO:0000269" key="5">
    <source>
    </source>
</evidence>
<evidence type="ECO:0000269" key="6">
    <source>
    </source>
</evidence>
<evidence type="ECO:0000303" key="7">
    <source>
    </source>
</evidence>
<evidence type="ECO:0000305" key="8"/>
<evidence type="ECO:0007744" key="9">
    <source>
    </source>
</evidence>
<evidence type="ECO:0007744" key="10">
    <source>
    </source>
</evidence>
<evidence type="ECO:0007744" key="11">
    <source>
    </source>
</evidence>
<proteinExistence type="evidence at protein level"/>
<sequence length="1152" mass="127651">MRKFNIRKVLDGLTAGSSSASQQQQQQQHPPGNREPEIQETLQSEHFQLCKTVRHGFPYQPSALAFDPVQKILAVGTQTGALRLFGRPGVECYCQHDSGAAVIQLQFLINEGALVSALADDTLHLWNLRQKRPAVLHSLKFCRERVTFCHLPFQSKWLYVGTERGNIHIVNVESFTLSGYVIMWNKAIELSSKAHPGPVVHISDNPMDEGKLLIGFESGTVVLWDLKSKKADYRYTYDEAIHSVAWHHEGKQFICSHSDGTLTIWNVRSPAKPVQTITPHGKQLKDGKKPEPCKPILKVELKTTRSGEPFIILSGGLSYDTVGRRPCLTVMHGKSTAVLEMDYSIVDFLTLCETPYPNDFQEPYAVVVLLEKDLVLIDLAQNGYPIFENPYPLSIHESPVTCCEYFADCPVDLIPALYSVGARQKRQGYSKKEWPINGGNWGLGAQSYPEIIITGHADGSVKFWDASAITLQVLYKLKTSKVFEKSRNKDDRQNTDIVDEDPYAIQIISWCPESRMLCIAGVSAHVIIYRFSKQEVLTEVIPMLEVRLLYEINDVDTPEGEQPPPLSTPVGSSNPQPIPPQSHPSTSSSSSDGLRDNVPCLKVKNSPLKQSPGYQTELVIQLVWVGGEPPQQITSLALNSSYGLVVFGNCNGIAMVDYLQKAVLLNLSTIELYGSNDPYRREPRSPRKSRQPSGAGLCDITEGTVVPEDRCKSPTSGSSSPHNSDDEQKVNNFIEKVKTQSRKFSKMVANDLAKMSRKLSLPTDLKPDLDVKDNSFSRSRSSSVTSIDKESRETISALHFCETLTRKADSSPSPCLWVGTTVGTAFVITLNLPPGPEQRLLQPVIVSPSGTILRLKGAILRMAFLDATGCLMSPAYEPWKEHNVAEEKDEKEKLKKRRPVSVSPSSSQEISENQYAVICSEKQAKVMSLPTQSCAYKQNITETSFVLRGDIVALSNSVCLACFCANGHIMTFSLPSLRPLLDVYYLPLTNMRIARTFCFANNGQALYLVSPTEIQRLTYSQETCENLQEMLGELFTPVETPEAPNRGFFKGLFGGGAQSLDREELFGESSSGKASRSLAQHIPGPGGIEGVKGAASGVVGELARARLALDERGQKLSDLEERTAAMMSSADSFSKHAHEMMLKYKDKKWYQF</sequence>
<name>STXB5_MOUSE</name>
<reference key="1">
    <citation type="journal article" date="2003" name="J. Biol. Chem.">
        <title>Tomosyn interacts with the t-SNAREs syntaxin4 and SNAP23 and plays a role in insulin-stimulated GLUT4 translocation.</title>
        <authorList>
            <person name="Widberg C.H."/>
            <person name="Bryant N.J."/>
            <person name="Girotti M."/>
            <person name="Rea S."/>
            <person name="James D.E."/>
        </authorList>
    </citation>
    <scope>NUCLEOTIDE SEQUENCE [MRNA] (ISOFORM 1)</scope>
    <scope>FUNCTION</scope>
    <scope>INTERACTION WITH STX1A AND STX4A</scope>
    <scope>IDENTIFICATION IN A COMPLEX WITH STX4A AND SNAP23</scope>
    <scope>SUBCELLULAR LOCATION</scope>
    <scope>TISSUE SPECIFICITY</scope>
    <source>
        <strain>Swiss albino</strain>
        <tissue>Adipocyte</tissue>
    </source>
</reference>
<reference key="2">
    <citation type="journal article" date="2005" name="Science">
        <title>The transcriptional landscape of the mammalian genome.</title>
        <authorList>
            <person name="Carninci P."/>
            <person name="Kasukawa T."/>
            <person name="Katayama S."/>
            <person name="Gough J."/>
            <person name="Frith M.C."/>
            <person name="Maeda N."/>
            <person name="Oyama R."/>
            <person name="Ravasi T."/>
            <person name="Lenhard B."/>
            <person name="Wells C."/>
            <person name="Kodzius R."/>
            <person name="Shimokawa K."/>
            <person name="Bajic V.B."/>
            <person name="Brenner S.E."/>
            <person name="Batalov S."/>
            <person name="Forrest A.R."/>
            <person name="Zavolan M."/>
            <person name="Davis M.J."/>
            <person name="Wilming L.G."/>
            <person name="Aidinis V."/>
            <person name="Allen J.E."/>
            <person name="Ambesi-Impiombato A."/>
            <person name="Apweiler R."/>
            <person name="Aturaliya R.N."/>
            <person name="Bailey T.L."/>
            <person name="Bansal M."/>
            <person name="Baxter L."/>
            <person name="Beisel K.W."/>
            <person name="Bersano T."/>
            <person name="Bono H."/>
            <person name="Chalk A.M."/>
            <person name="Chiu K.P."/>
            <person name="Choudhary V."/>
            <person name="Christoffels A."/>
            <person name="Clutterbuck D.R."/>
            <person name="Crowe M.L."/>
            <person name="Dalla E."/>
            <person name="Dalrymple B.P."/>
            <person name="de Bono B."/>
            <person name="Della Gatta G."/>
            <person name="di Bernardo D."/>
            <person name="Down T."/>
            <person name="Engstrom P."/>
            <person name="Fagiolini M."/>
            <person name="Faulkner G."/>
            <person name="Fletcher C.F."/>
            <person name="Fukushima T."/>
            <person name="Furuno M."/>
            <person name="Futaki S."/>
            <person name="Gariboldi M."/>
            <person name="Georgii-Hemming P."/>
            <person name="Gingeras T.R."/>
            <person name="Gojobori T."/>
            <person name="Green R.E."/>
            <person name="Gustincich S."/>
            <person name="Harbers M."/>
            <person name="Hayashi Y."/>
            <person name="Hensch T.K."/>
            <person name="Hirokawa N."/>
            <person name="Hill D."/>
            <person name="Huminiecki L."/>
            <person name="Iacono M."/>
            <person name="Ikeo K."/>
            <person name="Iwama A."/>
            <person name="Ishikawa T."/>
            <person name="Jakt M."/>
            <person name="Kanapin A."/>
            <person name="Katoh M."/>
            <person name="Kawasawa Y."/>
            <person name="Kelso J."/>
            <person name="Kitamura H."/>
            <person name="Kitano H."/>
            <person name="Kollias G."/>
            <person name="Krishnan S.P."/>
            <person name="Kruger A."/>
            <person name="Kummerfeld S.K."/>
            <person name="Kurochkin I.V."/>
            <person name="Lareau L.F."/>
            <person name="Lazarevic D."/>
            <person name="Lipovich L."/>
            <person name="Liu J."/>
            <person name="Liuni S."/>
            <person name="McWilliam S."/>
            <person name="Madan Babu M."/>
            <person name="Madera M."/>
            <person name="Marchionni L."/>
            <person name="Matsuda H."/>
            <person name="Matsuzawa S."/>
            <person name="Miki H."/>
            <person name="Mignone F."/>
            <person name="Miyake S."/>
            <person name="Morris K."/>
            <person name="Mottagui-Tabar S."/>
            <person name="Mulder N."/>
            <person name="Nakano N."/>
            <person name="Nakauchi H."/>
            <person name="Ng P."/>
            <person name="Nilsson R."/>
            <person name="Nishiguchi S."/>
            <person name="Nishikawa S."/>
            <person name="Nori F."/>
            <person name="Ohara O."/>
            <person name="Okazaki Y."/>
            <person name="Orlando V."/>
            <person name="Pang K.C."/>
            <person name="Pavan W.J."/>
            <person name="Pavesi G."/>
            <person name="Pesole G."/>
            <person name="Petrovsky N."/>
            <person name="Piazza S."/>
            <person name="Reed J."/>
            <person name="Reid J.F."/>
            <person name="Ring B.Z."/>
            <person name="Ringwald M."/>
            <person name="Rost B."/>
            <person name="Ruan Y."/>
            <person name="Salzberg S.L."/>
            <person name="Sandelin A."/>
            <person name="Schneider C."/>
            <person name="Schoenbach C."/>
            <person name="Sekiguchi K."/>
            <person name="Semple C.A."/>
            <person name="Seno S."/>
            <person name="Sessa L."/>
            <person name="Sheng Y."/>
            <person name="Shibata Y."/>
            <person name="Shimada H."/>
            <person name="Shimada K."/>
            <person name="Silva D."/>
            <person name="Sinclair B."/>
            <person name="Sperling S."/>
            <person name="Stupka E."/>
            <person name="Sugiura K."/>
            <person name="Sultana R."/>
            <person name="Takenaka Y."/>
            <person name="Taki K."/>
            <person name="Tammoja K."/>
            <person name="Tan S.L."/>
            <person name="Tang S."/>
            <person name="Taylor M.S."/>
            <person name="Tegner J."/>
            <person name="Teichmann S.A."/>
            <person name="Ueda H.R."/>
            <person name="van Nimwegen E."/>
            <person name="Verardo R."/>
            <person name="Wei C.L."/>
            <person name="Yagi K."/>
            <person name="Yamanishi H."/>
            <person name="Zabarovsky E."/>
            <person name="Zhu S."/>
            <person name="Zimmer A."/>
            <person name="Hide W."/>
            <person name="Bult C."/>
            <person name="Grimmond S.M."/>
            <person name="Teasdale R.D."/>
            <person name="Liu E.T."/>
            <person name="Brusic V."/>
            <person name="Quackenbush J."/>
            <person name="Wahlestedt C."/>
            <person name="Mattick J.S."/>
            <person name="Hume D.A."/>
            <person name="Kai C."/>
            <person name="Sasaki D."/>
            <person name="Tomaru Y."/>
            <person name="Fukuda S."/>
            <person name="Kanamori-Katayama M."/>
            <person name="Suzuki M."/>
            <person name="Aoki J."/>
            <person name="Arakawa T."/>
            <person name="Iida J."/>
            <person name="Imamura K."/>
            <person name="Itoh M."/>
            <person name="Kato T."/>
            <person name="Kawaji H."/>
            <person name="Kawagashira N."/>
            <person name="Kawashima T."/>
            <person name="Kojima M."/>
            <person name="Kondo S."/>
            <person name="Konno H."/>
            <person name="Nakano K."/>
            <person name="Ninomiya N."/>
            <person name="Nishio T."/>
            <person name="Okada M."/>
            <person name="Plessy C."/>
            <person name="Shibata K."/>
            <person name="Shiraki T."/>
            <person name="Suzuki S."/>
            <person name="Tagami M."/>
            <person name="Waki K."/>
            <person name="Watahiki A."/>
            <person name="Okamura-Oho Y."/>
            <person name="Suzuki H."/>
            <person name="Kawai J."/>
            <person name="Hayashizaki Y."/>
        </authorList>
    </citation>
    <scope>NUCLEOTIDE SEQUENCE [LARGE SCALE MRNA] (ISOFORM 2)</scope>
    <source>
        <strain>C57BL/6J</strain>
        <tissue>Testis</tissue>
    </source>
</reference>
<reference key="3">
    <citation type="journal article" date="2009" name="PLoS Biol.">
        <title>Lineage-specific biology revealed by a finished genome assembly of the mouse.</title>
        <authorList>
            <person name="Church D.M."/>
            <person name="Goodstadt L."/>
            <person name="Hillier L.W."/>
            <person name="Zody M.C."/>
            <person name="Goldstein S."/>
            <person name="She X."/>
            <person name="Bult C.J."/>
            <person name="Agarwala R."/>
            <person name="Cherry J.L."/>
            <person name="DiCuccio M."/>
            <person name="Hlavina W."/>
            <person name="Kapustin Y."/>
            <person name="Meric P."/>
            <person name="Maglott D."/>
            <person name="Birtle Z."/>
            <person name="Marques A.C."/>
            <person name="Graves T."/>
            <person name="Zhou S."/>
            <person name="Teague B."/>
            <person name="Potamousis K."/>
            <person name="Churas C."/>
            <person name="Place M."/>
            <person name="Herschleb J."/>
            <person name="Runnheim R."/>
            <person name="Forrest D."/>
            <person name="Amos-Landgraf J."/>
            <person name="Schwartz D.C."/>
            <person name="Cheng Z."/>
            <person name="Lindblad-Toh K."/>
            <person name="Eichler E.E."/>
            <person name="Ponting C.P."/>
        </authorList>
    </citation>
    <scope>NUCLEOTIDE SEQUENCE [LARGE SCALE GENOMIC DNA]</scope>
    <source>
        <strain>C57BL/6J</strain>
    </source>
</reference>
<reference key="4">
    <citation type="journal article" date="2003" name="DNA Res.">
        <title>Prediction of the coding sequences of mouse homologues of KIAA gene: II. The complete nucleotide sequences of 400 mouse KIAA-homologous cDNAs identified by screening of terminal sequences of cDNA clones randomly sampled from size-fractionated libraries.</title>
        <authorList>
            <person name="Okazaki N."/>
            <person name="Kikuno R."/>
            <person name="Ohara R."/>
            <person name="Inamoto S."/>
            <person name="Aizawa H."/>
            <person name="Yuasa S."/>
            <person name="Nakajima D."/>
            <person name="Nagase T."/>
            <person name="Ohara O."/>
            <person name="Koga H."/>
        </authorList>
    </citation>
    <scope>NUCLEOTIDE SEQUENCE [LARGE SCALE MRNA] OF 892-1152</scope>
    <source>
        <tissue>Brain</tissue>
    </source>
</reference>
<reference key="5">
    <citation type="journal article" date="2005" name="J. Neurochem.">
        <title>Two distinct genes drive expression of seven tomosyn isoforms in the mammalian brain, sharing a conserved structure with a unique variable domain.</title>
        <authorList>
            <person name="Groffen A.J.A."/>
            <person name="Jacobsen L."/>
            <person name="Schut D."/>
            <person name="Verhage M."/>
        </authorList>
    </citation>
    <scope>TISSUE SPECIFICITY</scope>
    <scope>ALTERNATIVE SPLICING</scope>
</reference>
<reference key="6">
    <citation type="journal article" date="2006" name="Mol. Cell. Proteomics">
        <title>Comprehensive identification of phosphorylation sites in postsynaptic density preparations.</title>
        <authorList>
            <person name="Trinidad J.C."/>
            <person name="Specht C.G."/>
            <person name="Thalhammer A."/>
            <person name="Schoepfer R."/>
            <person name="Burlingame A.L."/>
        </authorList>
    </citation>
    <scope>IDENTIFICATION BY MASS SPECTROMETRY [LARGE SCALE ANALYSIS]</scope>
    <source>
        <tissue>Brain</tissue>
    </source>
</reference>
<reference key="7">
    <citation type="journal article" date="2007" name="Proc. Natl. Acad. Sci. U.S.A.">
        <title>Large-scale phosphorylation analysis of mouse liver.</title>
        <authorList>
            <person name="Villen J."/>
            <person name="Beausoleil S.A."/>
            <person name="Gerber S.A."/>
            <person name="Gygi S.P."/>
        </authorList>
    </citation>
    <scope>PHOSPHORYLATION [LARGE SCALE ANALYSIS] AT SER-783 AND SER-786</scope>
    <scope>IDENTIFICATION BY MASS SPECTROMETRY [LARGE SCALE ANALYSIS]</scope>
    <source>
        <tissue>Liver</tissue>
    </source>
</reference>
<reference key="8">
    <citation type="journal article" date="2009" name="Immunity">
        <title>The phagosomal proteome in interferon-gamma-activated macrophages.</title>
        <authorList>
            <person name="Trost M."/>
            <person name="English L."/>
            <person name="Lemieux S."/>
            <person name="Courcelles M."/>
            <person name="Desjardins M."/>
            <person name="Thibault P."/>
        </authorList>
    </citation>
    <scope>PHOSPHORYLATION [LARGE SCALE ANALYSIS] AT SER-760; SER-783 AND SER-786</scope>
    <scope>IDENTIFICATION BY MASS SPECTROMETRY [LARGE SCALE ANALYSIS]</scope>
</reference>
<reference key="9">
    <citation type="journal article" date="2010" name="Cell">
        <title>A tissue-specific atlas of mouse protein phosphorylation and expression.</title>
        <authorList>
            <person name="Huttlin E.L."/>
            <person name="Jedrychowski M.P."/>
            <person name="Elias J.E."/>
            <person name="Goswami T."/>
            <person name="Rad R."/>
            <person name="Beausoleil S.A."/>
            <person name="Villen J."/>
            <person name="Haas W."/>
            <person name="Sowa M.E."/>
            <person name="Gygi S.P."/>
        </authorList>
    </citation>
    <scope>PHOSPHORYLATION [LARGE SCALE ANALYSIS] AT SER-724; SER-760; SER-783; THR-785; SER-786; SER-901; SER-903 AND SER-1059</scope>
    <scope>IDENTIFICATION BY MASS SPECTROMETRY [LARGE SCALE ANALYSIS]</scope>
    <source>
        <tissue>Brain</tissue>
        <tissue>Brown adipose tissue</tissue>
        <tissue>Heart</tissue>
        <tissue>Liver</tissue>
        <tissue>Lung</tissue>
        <tissue>Pancreas</tissue>
        <tissue>Spleen</tissue>
        <tissue>Testis</tissue>
    </source>
</reference>